<name>TCTP_HEVBR</name>
<evidence type="ECO:0000250" key="1"/>
<evidence type="ECO:0000255" key="2">
    <source>
        <dbReference type="PROSITE-ProRule" id="PRU01133"/>
    </source>
</evidence>
<evidence type="ECO:0000305" key="3"/>
<accession>Q9ZSW9</accession>
<accession>Q2MJR9</accession>
<dbReference type="EMBL" id="AF091455">
    <property type="protein sequence ID" value="AAD10032.1"/>
    <property type="molecule type" value="mRNA"/>
</dbReference>
<dbReference type="EMBL" id="DQ323740">
    <property type="protein sequence ID" value="ABC55649.1"/>
    <property type="molecule type" value="mRNA"/>
</dbReference>
<dbReference type="SMR" id="Q9ZSW9"/>
<dbReference type="GO" id="GO:0005737">
    <property type="term" value="C:cytoplasm"/>
    <property type="evidence" value="ECO:0007669"/>
    <property type="project" value="UniProtKB-SubCell"/>
</dbReference>
<dbReference type="GO" id="GO:0005509">
    <property type="term" value="F:calcium ion binding"/>
    <property type="evidence" value="ECO:0007669"/>
    <property type="project" value="TreeGrafter"/>
</dbReference>
<dbReference type="FunFam" id="2.170.150.10:FF:000003">
    <property type="entry name" value="Translationally-controlled tumor protein homolog"/>
    <property type="match status" value="1"/>
</dbReference>
<dbReference type="Gene3D" id="2.170.150.10">
    <property type="entry name" value="Metal Binding Protein, Guanine Nucleotide Exchange Factor, Chain A"/>
    <property type="match status" value="1"/>
</dbReference>
<dbReference type="InterPro" id="IPR011057">
    <property type="entry name" value="Mss4-like_sf"/>
</dbReference>
<dbReference type="InterPro" id="IPR011323">
    <property type="entry name" value="Mss4/transl-control_tumour"/>
</dbReference>
<dbReference type="InterPro" id="IPR034737">
    <property type="entry name" value="TCTP"/>
</dbReference>
<dbReference type="InterPro" id="IPR018103">
    <property type="entry name" value="Translation_control_tumour_CS"/>
</dbReference>
<dbReference type="InterPro" id="IPR018105">
    <property type="entry name" value="Translational_control_tumour_p"/>
</dbReference>
<dbReference type="PANTHER" id="PTHR11991:SF20">
    <property type="entry name" value="TRANSLATIONALLY CONTROLLED TUMOR PROTEIN"/>
    <property type="match status" value="1"/>
</dbReference>
<dbReference type="PANTHER" id="PTHR11991">
    <property type="entry name" value="TRANSLATIONALLY CONTROLLED TUMOR PROTEIN-RELATED"/>
    <property type="match status" value="1"/>
</dbReference>
<dbReference type="Pfam" id="PF00838">
    <property type="entry name" value="TCTP"/>
    <property type="match status" value="1"/>
</dbReference>
<dbReference type="PRINTS" id="PR01653">
    <property type="entry name" value="TCTPROTEIN"/>
</dbReference>
<dbReference type="SUPFAM" id="SSF51316">
    <property type="entry name" value="Mss4-like"/>
    <property type="match status" value="1"/>
</dbReference>
<dbReference type="PROSITE" id="PS01002">
    <property type="entry name" value="TCTP_1"/>
    <property type="match status" value="1"/>
</dbReference>
<dbReference type="PROSITE" id="PS01003">
    <property type="entry name" value="TCTP_2"/>
    <property type="match status" value="1"/>
</dbReference>
<dbReference type="PROSITE" id="PS51797">
    <property type="entry name" value="TCTP_3"/>
    <property type="match status" value="1"/>
</dbReference>
<sequence length="168" mass="19039">MLVYQDLLTGDELLSDSFPYKEIHNGILWEVEGKWVVQGAVDVDIGANPSAEGADEDEGVDDQAVKVVDIVDTFRLQEQPAFDKKQFVTYMKRFIKLLTPKLDEEKQESFKKNIEGATKFLLSKLSDLQFFVGESMHDDGSLVFAYYRGGATDPTFLYFAYALKEVKC</sequence>
<organism>
    <name type="scientific">Hevea brasiliensis</name>
    <name type="common">Para rubber tree</name>
    <name type="synonym">Siphonia brasiliensis</name>
    <dbReference type="NCBI Taxonomy" id="3981"/>
    <lineage>
        <taxon>Eukaryota</taxon>
        <taxon>Viridiplantae</taxon>
        <taxon>Streptophyta</taxon>
        <taxon>Embryophyta</taxon>
        <taxon>Tracheophyta</taxon>
        <taxon>Spermatophyta</taxon>
        <taxon>Magnoliopsida</taxon>
        <taxon>eudicotyledons</taxon>
        <taxon>Gunneridae</taxon>
        <taxon>Pentapetalae</taxon>
        <taxon>rosids</taxon>
        <taxon>fabids</taxon>
        <taxon>Malpighiales</taxon>
        <taxon>Euphorbiaceae</taxon>
        <taxon>Crotonoideae</taxon>
        <taxon>Micrandreae</taxon>
        <taxon>Hevea</taxon>
    </lineage>
</organism>
<keyword id="KW-0106">Calcium</keyword>
<keyword id="KW-0963">Cytoplasm</keyword>
<protein>
    <recommendedName>
        <fullName>Translationally-controlled tumor protein homolog</fullName>
        <shortName>TCTP</shortName>
    </recommendedName>
</protein>
<proteinExistence type="evidence at transcript level"/>
<feature type="chain" id="PRO_0000211301" description="Translationally-controlled tumor protein homolog">
    <location>
        <begin position="1"/>
        <end position="168"/>
    </location>
</feature>
<feature type="domain" description="TCTP" evidence="2">
    <location>
        <begin position="1"/>
        <end position="168"/>
    </location>
</feature>
<feature type="sequence conflict" description="In Ref. 2; ABC55649." evidence="3" ref="2">
    <original>E</original>
    <variation>V</variation>
    <location>
        <position position="32"/>
    </location>
</feature>
<feature type="sequence conflict" description="In Ref. 2; ABC55649." evidence="3" ref="2">
    <original>K</original>
    <variation>M</variation>
    <location>
        <position position="101"/>
    </location>
</feature>
<feature type="sequence conflict" description="In Ref. 2; ABC55649." evidence="3" ref="2">
    <original>G</original>
    <variation>E</variation>
    <location>
        <position position="149"/>
    </location>
</feature>
<gene>
    <name type="primary">TCTP</name>
</gene>
<comment type="function">
    <text evidence="1">Involved in calcium binding and microtubule stabilization.</text>
</comment>
<comment type="subcellular location">
    <subcellularLocation>
        <location evidence="1">Cytoplasm</location>
    </subcellularLocation>
</comment>
<comment type="similarity">
    <text evidence="2">Belongs to the TCTP family.</text>
</comment>
<reference key="1">
    <citation type="online journal article" date="1999" name="Plant Gene Register">
        <title>A Hevea brasiliensis homolog of translationally controlled tumor protein (HevTCTP) is expressed abundantly in latex.</title>
        <authorList>
            <person name="Shin D.H."/>
            <person name="Han K.-H."/>
        </authorList>
        <locator>PGR99-005</locator>
    </citation>
    <scope>NUCLEOTIDE SEQUENCE [MRNA]</scope>
    <source>
        <tissue>Latex</tissue>
    </source>
</reference>
<reference key="2">
    <citation type="submission" date="2005-12" db="EMBL/GenBank/DDBJ databases">
        <title>Cloning and nucleotide sequence analysis of translationally controlled tumor induce protein (TCTP) gene associated with TPD syndrome in rubber tree (Hevea brasiliensis).</title>
        <authorList>
            <person name="Venkatachalam P."/>
            <person name="Raghothama K.G."/>
            <person name="Thulaseedharan A."/>
        </authorList>
    </citation>
    <scope>NUCLEOTIDE SEQUENCE [MRNA]</scope>
    <source>
        <tissue>Latex</tissue>
    </source>
</reference>